<reference key="1">
    <citation type="submission" date="2008-05" db="EMBL/GenBank/DDBJ databases">
        <title>Complete sequence of Chlorobium limicola DSM 245.</title>
        <authorList>
            <consortium name="US DOE Joint Genome Institute"/>
            <person name="Lucas S."/>
            <person name="Copeland A."/>
            <person name="Lapidus A."/>
            <person name="Glavina del Rio T."/>
            <person name="Dalin E."/>
            <person name="Tice H."/>
            <person name="Bruce D."/>
            <person name="Goodwin L."/>
            <person name="Pitluck S."/>
            <person name="Schmutz J."/>
            <person name="Larimer F."/>
            <person name="Land M."/>
            <person name="Hauser L."/>
            <person name="Kyrpides N."/>
            <person name="Ovchinnikova G."/>
            <person name="Zhao F."/>
            <person name="Li T."/>
            <person name="Liu Z."/>
            <person name="Overmann J."/>
            <person name="Bryant D.A."/>
            <person name="Richardson P."/>
        </authorList>
    </citation>
    <scope>NUCLEOTIDE SEQUENCE [LARGE SCALE GENOMIC DNA]</scope>
    <source>
        <strain>DSM 245 / NBRC 103803 / 6330</strain>
    </source>
</reference>
<name>DAPA_CHLL2</name>
<accession>B3EH29</accession>
<protein>
    <recommendedName>
        <fullName evidence="1">4-hydroxy-tetrahydrodipicolinate synthase</fullName>
        <shortName evidence="1">HTPA synthase</shortName>
        <ecNumber evidence="1">4.3.3.7</ecNumber>
    </recommendedName>
</protein>
<comment type="function">
    <text evidence="1">Catalyzes the condensation of (S)-aspartate-beta-semialdehyde [(S)-ASA] and pyruvate to 4-hydroxy-tetrahydrodipicolinate (HTPA).</text>
</comment>
<comment type="catalytic activity">
    <reaction evidence="1">
        <text>L-aspartate 4-semialdehyde + pyruvate = (2S,4S)-4-hydroxy-2,3,4,5-tetrahydrodipicolinate + H2O + H(+)</text>
        <dbReference type="Rhea" id="RHEA:34171"/>
        <dbReference type="ChEBI" id="CHEBI:15361"/>
        <dbReference type="ChEBI" id="CHEBI:15377"/>
        <dbReference type="ChEBI" id="CHEBI:15378"/>
        <dbReference type="ChEBI" id="CHEBI:67139"/>
        <dbReference type="ChEBI" id="CHEBI:537519"/>
        <dbReference type="EC" id="4.3.3.7"/>
    </reaction>
</comment>
<comment type="pathway">
    <text evidence="1">Amino-acid biosynthesis; L-lysine biosynthesis via DAP pathway; (S)-tetrahydrodipicolinate from L-aspartate: step 3/4.</text>
</comment>
<comment type="subunit">
    <text evidence="1">Homotetramer; dimer of dimers.</text>
</comment>
<comment type="subcellular location">
    <subcellularLocation>
        <location evidence="1">Cytoplasm</location>
    </subcellularLocation>
</comment>
<comment type="similarity">
    <text evidence="1">Belongs to the DapA family.</text>
</comment>
<comment type="caution">
    <text evidence="2">Was originally thought to be a dihydrodipicolinate synthase (DHDPS), catalyzing the condensation of (S)-aspartate-beta-semialdehyde [(S)-ASA] and pyruvate to dihydrodipicolinate (DHDP). However, it was shown in E.coli that the product of the enzymatic reaction is not dihydrodipicolinate but in fact (4S)-4-hydroxy-2,3,4,5-tetrahydro-(2S)-dipicolinic acid (HTPA), and that the consecutive dehydration reaction leading to DHDP is not spontaneous but catalyzed by DapB.</text>
</comment>
<dbReference type="EC" id="4.3.3.7" evidence="1"/>
<dbReference type="EMBL" id="CP001097">
    <property type="protein sequence ID" value="ACD89709.1"/>
    <property type="molecule type" value="Genomic_DNA"/>
</dbReference>
<dbReference type="RefSeq" id="WP_012465590.1">
    <property type="nucleotide sequence ID" value="NC_010803.1"/>
</dbReference>
<dbReference type="SMR" id="B3EH29"/>
<dbReference type="STRING" id="290315.Clim_0622"/>
<dbReference type="KEGG" id="cli:Clim_0622"/>
<dbReference type="eggNOG" id="COG0329">
    <property type="taxonomic scope" value="Bacteria"/>
</dbReference>
<dbReference type="HOGENOM" id="CLU_049343_7_0_10"/>
<dbReference type="OrthoDB" id="9782828at2"/>
<dbReference type="UniPathway" id="UPA00034">
    <property type="reaction ID" value="UER00017"/>
</dbReference>
<dbReference type="Proteomes" id="UP000008841">
    <property type="component" value="Chromosome"/>
</dbReference>
<dbReference type="GO" id="GO:0005829">
    <property type="term" value="C:cytosol"/>
    <property type="evidence" value="ECO:0007669"/>
    <property type="project" value="TreeGrafter"/>
</dbReference>
<dbReference type="GO" id="GO:0008840">
    <property type="term" value="F:4-hydroxy-tetrahydrodipicolinate synthase activity"/>
    <property type="evidence" value="ECO:0007669"/>
    <property type="project" value="UniProtKB-UniRule"/>
</dbReference>
<dbReference type="GO" id="GO:0019877">
    <property type="term" value="P:diaminopimelate biosynthetic process"/>
    <property type="evidence" value="ECO:0007669"/>
    <property type="project" value="UniProtKB-UniRule"/>
</dbReference>
<dbReference type="GO" id="GO:0009089">
    <property type="term" value="P:lysine biosynthetic process via diaminopimelate"/>
    <property type="evidence" value="ECO:0007669"/>
    <property type="project" value="UniProtKB-UniRule"/>
</dbReference>
<dbReference type="CDD" id="cd00950">
    <property type="entry name" value="DHDPS"/>
    <property type="match status" value="1"/>
</dbReference>
<dbReference type="Gene3D" id="3.20.20.70">
    <property type="entry name" value="Aldolase class I"/>
    <property type="match status" value="1"/>
</dbReference>
<dbReference type="HAMAP" id="MF_00418">
    <property type="entry name" value="DapA"/>
    <property type="match status" value="1"/>
</dbReference>
<dbReference type="InterPro" id="IPR013785">
    <property type="entry name" value="Aldolase_TIM"/>
</dbReference>
<dbReference type="InterPro" id="IPR005263">
    <property type="entry name" value="DapA"/>
</dbReference>
<dbReference type="InterPro" id="IPR002220">
    <property type="entry name" value="DapA-like"/>
</dbReference>
<dbReference type="InterPro" id="IPR020625">
    <property type="entry name" value="Schiff_base-form_aldolases_AS"/>
</dbReference>
<dbReference type="NCBIfam" id="TIGR00674">
    <property type="entry name" value="dapA"/>
    <property type="match status" value="1"/>
</dbReference>
<dbReference type="PANTHER" id="PTHR12128:SF66">
    <property type="entry name" value="4-HYDROXY-2-OXOGLUTARATE ALDOLASE, MITOCHONDRIAL"/>
    <property type="match status" value="1"/>
</dbReference>
<dbReference type="PANTHER" id="PTHR12128">
    <property type="entry name" value="DIHYDRODIPICOLINATE SYNTHASE"/>
    <property type="match status" value="1"/>
</dbReference>
<dbReference type="Pfam" id="PF00701">
    <property type="entry name" value="DHDPS"/>
    <property type="match status" value="1"/>
</dbReference>
<dbReference type="PIRSF" id="PIRSF001365">
    <property type="entry name" value="DHDPS"/>
    <property type="match status" value="1"/>
</dbReference>
<dbReference type="PRINTS" id="PR00146">
    <property type="entry name" value="DHPICSNTHASE"/>
</dbReference>
<dbReference type="SMART" id="SM01130">
    <property type="entry name" value="DHDPS"/>
    <property type="match status" value="1"/>
</dbReference>
<dbReference type="SUPFAM" id="SSF51569">
    <property type="entry name" value="Aldolase"/>
    <property type="match status" value="1"/>
</dbReference>
<dbReference type="PROSITE" id="PS00666">
    <property type="entry name" value="DHDPS_2"/>
    <property type="match status" value="1"/>
</dbReference>
<evidence type="ECO:0000255" key="1">
    <source>
        <dbReference type="HAMAP-Rule" id="MF_00418"/>
    </source>
</evidence>
<evidence type="ECO:0000305" key="2"/>
<gene>
    <name evidence="1" type="primary">dapA</name>
    <name type="ordered locus">Clim_0622</name>
</gene>
<feature type="chain" id="PRO_1000124021" description="4-hydroxy-tetrahydrodipicolinate synthase">
    <location>
        <begin position="1"/>
        <end position="296"/>
    </location>
</feature>
<feature type="active site" description="Proton donor/acceptor" evidence="1">
    <location>
        <position position="137"/>
    </location>
</feature>
<feature type="active site" description="Schiff-base intermediate with substrate" evidence="1">
    <location>
        <position position="166"/>
    </location>
</feature>
<feature type="binding site" evidence="1">
    <location>
        <position position="49"/>
    </location>
    <ligand>
        <name>pyruvate</name>
        <dbReference type="ChEBI" id="CHEBI:15361"/>
    </ligand>
</feature>
<feature type="binding site" evidence="1">
    <location>
        <position position="208"/>
    </location>
    <ligand>
        <name>pyruvate</name>
        <dbReference type="ChEBI" id="CHEBI:15361"/>
    </ligand>
</feature>
<feature type="site" description="Part of a proton relay during catalysis" evidence="1">
    <location>
        <position position="48"/>
    </location>
</feature>
<feature type="site" description="Part of a proton relay during catalysis" evidence="1">
    <location>
        <position position="111"/>
    </location>
</feature>
<sequence length="296" mass="32025">MSTRLISGSAVALVTPFRQDCSVDTVALRQLVRFHIAAGTDIIIPCGTTGESPTLSMEEQSRIIRTVKEEAGEQIMVAAGAGTNATDHAVELAKNAEKAGASAILSVAPYYNKPSQEGIYQHYARIAEAVSVPIIIYNVPGRTGSNVAASTILRLARDFGNIAAVKEASDNMAQITELLEERPENFSVLTGEDMLILPFMAMGGDGVISVAANQVPSAVKRLVEAARTGRLDEARAINTRYRRLFRLNFIESNPVPVKYALALMGMIEEVYRLPLVPLADENKRILKEELQSLGLV</sequence>
<proteinExistence type="inferred from homology"/>
<keyword id="KW-0028">Amino-acid biosynthesis</keyword>
<keyword id="KW-0963">Cytoplasm</keyword>
<keyword id="KW-0220">Diaminopimelate biosynthesis</keyword>
<keyword id="KW-0456">Lyase</keyword>
<keyword id="KW-0457">Lysine biosynthesis</keyword>
<keyword id="KW-0704">Schiff base</keyword>
<organism>
    <name type="scientific">Chlorobium limicola (strain DSM 245 / NBRC 103803 / 6330)</name>
    <dbReference type="NCBI Taxonomy" id="290315"/>
    <lineage>
        <taxon>Bacteria</taxon>
        <taxon>Pseudomonadati</taxon>
        <taxon>Chlorobiota</taxon>
        <taxon>Chlorobiia</taxon>
        <taxon>Chlorobiales</taxon>
        <taxon>Chlorobiaceae</taxon>
        <taxon>Chlorobium/Pelodictyon group</taxon>
        <taxon>Chlorobium</taxon>
    </lineage>
</organism>